<proteinExistence type="inferred from homology"/>
<accession>A5HY31</accession>
<accession>A7G051</accession>
<organism>
    <name type="scientific">Clostridium botulinum (strain Hall / ATCC 3502 / NCTC 13319 / Type A)</name>
    <dbReference type="NCBI Taxonomy" id="441771"/>
    <lineage>
        <taxon>Bacteria</taxon>
        <taxon>Bacillati</taxon>
        <taxon>Bacillota</taxon>
        <taxon>Clostridia</taxon>
        <taxon>Eubacteriales</taxon>
        <taxon>Clostridiaceae</taxon>
        <taxon>Clostridium</taxon>
    </lineage>
</organism>
<protein>
    <recommendedName>
        <fullName evidence="1">Large ribosomal subunit protein bL31</fullName>
    </recommendedName>
    <alternativeName>
        <fullName evidence="2">50S ribosomal protein L31</fullName>
    </alternativeName>
</protein>
<evidence type="ECO:0000255" key="1">
    <source>
        <dbReference type="HAMAP-Rule" id="MF_00501"/>
    </source>
</evidence>
<evidence type="ECO:0000305" key="2"/>
<keyword id="KW-0479">Metal-binding</keyword>
<keyword id="KW-1185">Reference proteome</keyword>
<keyword id="KW-0687">Ribonucleoprotein</keyword>
<keyword id="KW-0689">Ribosomal protein</keyword>
<keyword id="KW-0694">RNA-binding</keyword>
<keyword id="KW-0699">rRNA-binding</keyword>
<keyword id="KW-0862">Zinc</keyword>
<sequence length="72" mass="8107">MREGIHPEYNHDVVVKCACGNTFTTGSTNKELKVEICSKCHPFFTGKQKIVDAGGRVDKFMKKFNLSNEDVK</sequence>
<gene>
    <name evidence="1" type="primary">rpmE</name>
    <name type="ordered locus">CBO0135</name>
    <name type="ordered locus">CLC_0183</name>
</gene>
<reference key="1">
    <citation type="journal article" date="2007" name="Genome Res.">
        <title>Genome sequence of a proteolytic (Group I) Clostridium botulinum strain Hall A and comparative analysis of the clostridial genomes.</title>
        <authorList>
            <person name="Sebaihia M."/>
            <person name="Peck M.W."/>
            <person name="Minton N.P."/>
            <person name="Thomson N.R."/>
            <person name="Holden M.T.G."/>
            <person name="Mitchell W.J."/>
            <person name="Carter A.T."/>
            <person name="Bentley S.D."/>
            <person name="Mason D.R."/>
            <person name="Crossman L."/>
            <person name="Paul C.J."/>
            <person name="Ivens A."/>
            <person name="Wells-Bennik M.H.J."/>
            <person name="Davis I.J."/>
            <person name="Cerdeno-Tarraga A.M."/>
            <person name="Churcher C."/>
            <person name="Quail M.A."/>
            <person name="Chillingworth T."/>
            <person name="Feltwell T."/>
            <person name="Fraser A."/>
            <person name="Goodhead I."/>
            <person name="Hance Z."/>
            <person name="Jagels K."/>
            <person name="Larke N."/>
            <person name="Maddison M."/>
            <person name="Moule S."/>
            <person name="Mungall K."/>
            <person name="Norbertczak H."/>
            <person name="Rabbinowitsch E."/>
            <person name="Sanders M."/>
            <person name="Simmonds M."/>
            <person name="White B."/>
            <person name="Whithead S."/>
            <person name="Parkhill J."/>
        </authorList>
    </citation>
    <scope>NUCLEOTIDE SEQUENCE [LARGE SCALE GENOMIC DNA]</scope>
    <source>
        <strain>Hall / ATCC 3502 / NCTC 13319 / Type A</strain>
    </source>
</reference>
<reference key="2">
    <citation type="journal article" date="2007" name="PLoS ONE">
        <title>Analysis of the neurotoxin complex genes in Clostridium botulinum A1-A4 and B1 strains: BoNT/A3, /Ba4 and /B1 clusters are located within plasmids.</title>
        <authorList>
            <person name="Smith T.J."/>
            <person name="Hill K.K."/>
            <person name="Foley B.T."/>
            <person name="Detter J.C."/>
            <person name="Munk A.C."/>
            <person name="Bruce D.C."/>
            <person name="Doggett N.A."/>
            <person name="Smith L.A."/>
            <person name="Marks J.D."/>
            <person name="Xie G."/>
            <person name="Brettin T.S."/>
        </authorList>
    </citation>
    <scope>NUCLEOTIDE SEQUENCE [LARGE SCALE GENOMIC DNA]</scope>
    <source>
        <strain>Hall / ATCC 3502 / NCTC 13319 / Type A</strain>
    </source>
</reference>
<comment type="function">
    <text evidence="1">Binds the 23S rRNA.</text>
</comment>
<comment type="cofactor">
    <cofactor evidence="1">
        <name>Zn(2+)</name>
        <dbReference type="ChEBI" id="CHEBI:29105"/>
    </cofactor>
    <text evidence="1">Binds 1 zinc ion per subunit.</text>
</comment>
<comment type="subunit">
    <text evidence="1">Part of the 50S ribosomal subunit.</text>
</comment>
<comment type="similarity">
    <text evidence="1">Belongs to the bacterial ribosomal protein bL31 family. Type A subfamily.</text>
</comment>
<name>RL31_CLOBH</name>
<feature type="chain" id="PRO_1000126592" description="Large ribosomal subunit protein bL31">
    <location>
        <begin position="1"/>
        <end position="72"/>
    </location>
</feature>
<feature type="binding site" evidence="1">
    <location>
        <position position="17"/>
    </location>
    <ligand>
        <name>Zn(2+)</name>
        <dbReference type="ChEBI" id="CHEBI:29105"/>
    </ligand>
</feature>
<feature type="binding site" evidence="1">
    <location>
        <position position="19"/>
    </location>
    <ligand>
        <name>Zn(2+)</name>
        <dbReference type="ChEBI" id="CHEBI:29105"/>
    </ligand>
</feature>
<feature type="binding site" evidence="1">
    <location>
        <position position="37"/>
    </location>
    <ligand>
        <name>Zn(2+)</name>
        <dbReference type="ChEBI" id="CHEBI:29105"/>
    </ligand>
</feature>
<feature type="binding site" evidence="1">
    <location>
        <position position="40"/>
    </location>
    <ligand>
        <name>Zn(2+)</name>
        <dbReference type="ChEBI" id="CHEBI:29105"/>
    </ligand>
</feature>
<dbReference type="EMBL" id="CP000727">
    <property type="protein sequence ID" value="ABS36782.1"/>
    <property type="molecule type" value="Genomic_DNA"/>
</dbReference>
<dbReference type="EMBL" id="AM412317">
    <property type="protein sequence ID" value="CAL81690.1"/>
    <property type="molecule type" value="Genomic_DNA"/>
</dbReference>
<dbReference type="RefSeq" id="WP_003355803.1">
    <property type="nucleotide sequence ID" value="NC_009698.1"/>
</dbReference>
<dbReference type="RefSeq" id="YP_001252682.1">
    <property type="nucleotide sequence ID" value="NC_009495.1"/>
</dbReference>
<dbReference type="RefSeq" id="YP_001386094.1">
    <property type="nucleotide sequence ID" value="NC_009698.1"/>
</dbReference>
<dbReference type="GeneID" id="5184390"/>
<dbReference type="KEGG" id="cbh:CLC_0183"/>
<dbReference type="KEGG" id="cbo:CBO0135"/>
<dbReference type="PATRIC" id="fig|413999.7.peg.134"/>
<dbReference type="HOGENOM" id="CLU_114306_4_3_9"/>
<dbReference type="PRO" id="PR:A5HY31"/>
<dbReference type="Proteomes" id="UP000001986">
    <property type="component" value="Chromosome"/>
</dbReference>
<dbReference type="GO" id="GO:1990904">
    <property type="term" value="C:ribonucleoprotein complex"/>
    <property type="evidence" value="ECO:0007669"/>
    <property type="project" value="UniProtKB-KW"/>
</dbReference>
<dbReference type="GO" id="GO:0005840">
    <property type="term" value="C:ribosome"/>
    <property type="evidence" value="ECO:0007669"/>
    <property type="project" value="UniProtKB-KW"/>
</dbReference>
<dbReference type="GO" id="GO:0046872">
    <property type="term" value="F:metal ion binding"/>
    <property type="evidence" value="ECO:0007669"/>
    <property type="project" value="UniProtKB-KW"/>
</dbReference>
<dbReference type="GO" id="GO:0019843">
    <property type="term" value="F:rRNA binding"/>
    <property type="evidence" value="ECO:0007669"/>
    <property type="project" value="UniProtKB-KW"/>
</dbReference>
<dbReference type="GO" id="GO:0003735">
    <property type="term" value="F:structural constituent of ribosome"/>
    <property type="evidence" value="ECO:0007669"/>
    <property type="project" value="InterPro"/>
</dbReference>
<dbReference type="GO" id="GO:0006412">
    <property type="term" value="P:translation"/>
    <property type="evidence" value="ECO:0007669"/>
    <property type="project" value="UniProtKB-UniRule"/>
</dbReference>
<dbReference type="Gene3D" id="4.10.830.30">
    <property type="entry name" value="Ribosomal protein L31"/>
    <property type="match status" value="1"/>
</dbReference>
<dbReference type="HAMAP" id="MF_00501">
    <property type="entry name" value="Ribosomal_bL31_1"/>
    <property type="match status" value="1"/>
</dbReference>
<dbReference type="InterPro" id="IPR034704">
    <property type="entry name" value="Ribosomal_bL28/bL31-like_sf"/>
</dbReference>
<dbReference type="InterPro" id="IPR002150">
    <property type="entry name" value="Ribosomal_bL31"/>
</dbReference>
<dbReference type="InterPro" id="IPR027491">
    <property type="entry name" value="Ribosomal_bL31_A"/>
</dbReference>
<dbReference type="InterPro" id="IPR042105">
    <property type="entry name" value="Ribosomal_bL31_sf"/>
</dbReference>
<dbReference type="NCBIfam" id="TIGR00105">
    <property type="entry name" value="L31"/>
    <property type="match status" value="1"/>
</dbReference>
<dbReference type="NCBIfam" id="NF000612">
    <property type="entry name" value="PRK00019.1"/>
    <property type="match status" value="1"/>
</dbReference>
<dbReference type="NCBIfam" id="NF001809">
    <property type="entry name" value="PRK00528.1"/>
    <property type="match status" value="1"/>
</dbReference>
<dbReference type="PANTHER" id="PTHR33280">
    <property type="entry name" value="50S RIBOSOMAL PROTEIN L31, CHLOROPLASTIC"/>
    <property type="match status" value="1"/>
</dbReference>
<dbReference type="PANTHER" id="PTHR33280:SF1">
    <property type="entry name" value="LARGE RIBOSOMAL SUBUNIT PROTEIN BL31C"/>
    <property type="match status" value="1"/>
</dbReference>
<dbReference type="Pfam" id="PF01197">
    <property type="entry name" value="Ribosomal_L31"/>
    <property type="match status" value="1"/>
</dbReference>
<dbReference type="PRINTS" id="PR01249">
    <property type="entry name" value="RIBOSOMALL31"/>
</dbReference>
<dbReference type="SUPFAM" id="SSF143800">
    <property type="entry name" value="L28p-like"/>
    <property type="match status" value="1"/>
</dbReference>
<dbReference type="PROSITE" id="PS01143">
    <property type="entry name" value="RIBOSOMAL_L31"/>
    <property type="match status" value="1"/>
</dbReference>